<gene>
    <name type="ORF">CPC735_013700</name>
</gene>
<protein>
    <recommendedName>
        <fullName>Subtilisin-like protease CPC735_013700</fullName>
        <ecNumber>3.4.21.-</ecNumber>
    </recommendedName>
</protein>
<comment type="function">
    <text evidence="1">Secreted subtilisin-like serine protease with keratinolytic activity that contributes to pathogenicity.</text>
</comment>
<comment type="subcellular location">
    <subcellularLocation>
        <location evidence="1">Secreted</location>
    </subcellularLocation>
</comment>
<comment type="similarity">
    <text evidence="4">Belongs to the peptidase S8 family.</text>
</comment>
<name>SUB7C_COCP7</name>
<feature type="signal peptide" evidence="2">
    <location>
        <begin position="1"/>
        <end position="19"/>
    </location>
</feature>
<feature type="propeptide" id="PRO_0000407022" evidence="1">
    <location>
        <begin position="20"/>
        <end position="116"/>
    </location>
</feature>
<feature type="chain" id="PRO_0000407023" description="Subtilisin-like protease CPC735_013700">
    <location>
        <begin position="117"/>
        <end position="400"/>
    </location>
</feature>
<feature type="domain" description="Inhibitor I9" evidence="2">
    <location>
        <begin position="36"/>
        <end position="115"/>
    </location>
</feature>
<feature type="domain" description="Peptidase S8" evidence="3">
    <location>
        <begin position="126"/>
        <end position="400"/>
    </location>
</feature>
<feature type="active site" description="Charge relay system" evidence="3">
    <location>
        <position position="161"/>
    </location>
</feature>
<feature type="active site" description="Charge relay system" evidence="3">
    <location>
        <position position="192"/>
    </location>
</feature>
<feature type="active site" description="Charge relay system" evidence="3">
    <location>
        <position position="346"/>
    </location>
</feature>
<feature type="glycosylation site" description="N-linked (GlcNAc...) asparagine" evidence="2">
    <location>
        <position position="252"/>
    </location>
</feature>
<feature type="glycosylation site" description="N-linked (GlcNAc...) asparagine" evidence="2">
    <location>
        <position position="396"/>
    </location>
</feature>
<dbReference type="EC" id="3.4.21.-"/>
<dbReference type="EMBL" id="ACFW01000001">
    <property type="protein sequence ID" value="EER30052.1"/>
    <property type="molecule type" value="Genomic_DNA"/>
</dbReference>
<dbReference type="SMR" id="C5NZ69"/>
<dbReference type="KEGG" id="cpw:9697692"/>
<dbReference type="VEuPathDB" id="FungiDB:CPC735_013700"/>
<dbReference type="HOGENOM" id="CLU_011263_1_3_1"/>
<dbReference type="OrthoDB" id="206201at2759"/>
<dbReference type="Proteomes" id="UP000009084">
    <property type="component" value="Unassembled WGS sequence"/>
</dbReference>
<dbReference type="GO" id="GO:0005576">
    <property type="term" value="C:extracellular region"/>
    <property type="evidence" value="ECO:0007669"/>
    <property type="project" value="UniProtKB-SubCell"/>
</dbReference>
<dbReference type="GO" id="GO:0004252">
    <property type="term" value="F:serine-type endopeptidase activity"/>
    <property type="evidence" value="ECO:0007669"/>
    <property type="project" value="InterPro"/>
</dbReference>
<dbReference type="GO" id="GO:0006508">
    <property type="term" value="P:proteolysis"/>
    <property type="evidence" value="ECO:0007669"/>
    <property type="project" value="UniProtKB-KW"/>
</dbReference>
<dbReference type="CDD" id="cd04077">
    <property type="entry name" value="Peptidases_S8_PCSK9_ProteinaseK_like"/>
    <property type="match status" value="1"/>
</dbReference>
<dbReference type="FunFam" id="3.40.50.200:FF:000014">
    <property type="entry name" value="Proteinase K"/>
    <property type="match status" value="1"/>
</dbReference>
<dbReference type="Gene3D" id="3.30.70.80">
    <property type="entry name" value="Peptidase S8 propeptide/proteinase inhibitor I9"/>
    <property type="match status" value="1"/>
</dbReference>
<dbReference type="Gene3D" id="3.40.50.200">
    <property type="entry name" value="Peptidase S8/S53 domain"/>
    <property type="match status" value="1"/>
</dbReference>
<dbReference type="InterPro" id="IPR034193">
    <property type="entry name" value="PCSK9_ProteinaseK-like"/>
</dbReference>
<dbReference type="InterPro" id="IPR000209">
    <property type="entry name" value="Peptidase_S8/S53_dom"/>
</dbReference>
<dbReference type="InterPro" id="IPR036852">
    <property type="entry name" value="Peptidase_S8/S53_dom_sf"/>
</dbReference>
<dbReference type="InterPro" id="IPR023827">
    <property type="entry name" value="Peptidase_S8_Asp-AS"/>
</dbReference>
<dbReference type="InterPro" id="IPR022398">
    <property type="entry name" value="Peptidase_S8_His-AS"/>
</dbReference>
<dbReference type="InterPro" id="IPR050131">
    <property type="entry name" value="Peptidase_S8_subtilisin-like"/>
</dbReference>
<dbReference type="InterPro" id="IPR015500">
    <property type="entry name" value="Peptidase_S8_subtilisin-rel"/>
</dbReference>
<dbReference type="InterPro" id="IPR010259">
    <property type="entry name" value="S8pro/Inhibitor_I9"/>
</dbReference>
<dbReference type="InterPro" id="IPR037045">
    <property type="entry name" value="S8pro/Inhibitor_I9_sf"/>
</dbReference>
<dbReference type="PANTHER" id="PTHR43806:SF58">
    <property type="entry name" value="ALKALINE PROTEASE 1-RELATED"/>
    <property type="match status" value="1"/>
</dbReference>
<dbReference type="PANTHER" id="PTHR43806">
    <property type="entry name" value="PEPTIDASE S8"/>
    <property type="match status" value="1"/>
</dbReference>
<dbReference type="Pfam" id="PF05922">
    <property type="entry name" value="Inhibitor_I9"/>
    <property type="match status" value="1"/>
</dbReference>
<dbReference type="Pfam" id="PF00082">
    <property type="entry name" value="Peptidase_S8"/>
    <property type="match status" value="1"/>
</dbReference>
<dbReference type="PRINTS" id="PR00723">
    <property type="entry name" value="SUBTILISIN"/>
</dbReference>
<dbReference type="SUPFAM" id="SSF54897">
    <property type="entry name" value="Protease propeptides/inhibitors"/>
    <property type="match status" value="1"/>
</dbReference>
<dbReference type="SUPFAM" id="SSF52743">
    <property type="entry name" value="Subtilisin-like"/>
    <property type="match status" value="1"/>
</dbReference>
<dbReference type="PROSITE" id="PS51892">
    <property type="entry name" value="SUBTILASE"/>
    <property type="match status" value="1"/>
</dbReference>
<dbReference type="PROSITE" id="PS00136">
    <property type="entry name" value="SUBTILASE_ASP"/>
    <property type="match status" value="1"/>
</dbReference>
<dbReference type="PROSITE" id="PS00137">
    <property type="entry name" value="SUBTILASE_HIS"/>
    <property type="match status" value="1"/>
</dbReference>
<evidence type="ECO:0000250" key="1"/>
<evidence type="ECO:0000255" key="2"/>
<evidence type="ECO:0000255" key="3">
    <source>
        <dbReference type="PROSITE-ProRule" id="PRU01240"/>
    </source>
</evidence>
<evidence type="ECO:0000305" key="4"/>
<keyword id="KW-0325">Glycoprotein</keyword>
<keyword id="KW-0378">Hydrolase</keyword>
<keyword id="KW-0645">Protease</keyword>
<keyword id="KW-0964">Secreted</keyword>
<keyword id="KW-0720">Serine protease</keyword>
<keyword id="KW-0732">Signal</keyword>
<keyword id="KW-0843">Virulence</keyword>
<keyword id="KW-0865">Zymogen</keyword>
<organism>
    <name type="scientific">Coccidioides posadasii (strain C735)</name>
    <name type="common">Valley fever fungus</name>
    <dbReference type="NCBI Taxonomy" id="222929"/>
    <lineage>
        <taxon>Eukaryota</taxon>
        <taxon>Fungi</taxon>
        <taxon>Dikarya</taxon>
        <taxon>Ascomycota</taxon>
        <taxon>Pezizomycotina</taxon>
        <taxon>Eurotiomycetes</taxon>
        <taxon>Eurotiomycetidae</taxon>
        <taxon>Onygenales</taxon>
        <taxon>Onygenaceae</taxon>
        <taxon>Coccidioides</taxon>
    </lineage>
</organism>
<reference key="1">
    <citation type="journal article" date="2009" name="Genome Res.">
        <title>Comparative genomic analyses of the human fungal pathogens Coccidioides and their relatives.</title>
        <authorList>
            <person name="Sharpton T.J."/>
            <person name="Stajich J.E."/>
            <person name="Rounsley S.D."/>
            <person name="Gardner M.J."/>
            <person name="Wortman J.R."/>
            <person name="Jordar V.S."/>
            <person name="Maiti R."/>
            <person name="Kodira C.D."/>
            <person name="Neafsey D.E."/>
            <person name="Zeng Q."/>
            <person name="Hung C.-Y."/>
            <person name="McMahan C."/>
            <person name="Muszewska A."/>
            <person name="Grynberg M."/>
            <person name="Mandel M.A."/>
            <person name="Kellner E.M."/>
            <person name="Barker B.M."/>
            <person name="Galgiani J.N."/>
            <person name="Orbach M.J."/>
            <person name="Kirkland T.N."/>
            <person name="Cole G.T."/>
            <person name="Henn M.R."/>
            <person name="Birren B.W."/>
            <person name="Taylor J.W."/>
        </authorList>
    </citation>
    <scope>NUCLEOTIDE SEQUENCE [LARGE SCALE GENOMIC DNA]</scope>
    <source>
        <strain>C735</strain>
    </source>
</reference>
<accession>C5NZ69</accession>
<proteinExistence type="inferred from homology"/>
<sequence>MGFVKILSLSLAATAVADAATILSPRYPNDVIPNEYIVVMKDGVSSASFASHSAWVADMHYYNHTKRALPGHGIQEVYDIYEMKAYSGKFDEDTIQRIAKEPDVAFIEPNQIVTISEISVQKAAPSWGLPRISVKENQLSSNTDYFYDSSAGAGIWVYVVDTGVDIKHPDFEGRAVWGTSTVDRSKTDRLGHGTHVAGTIASKTYGVAKAVKIIAVKVFKDRTTSYKNIIGGIDWAVKHSKKNNMLSKSVVNMSLGGGRSSAMNKAAANAHKTGMFVAVSAGNTPVDAMNFSPASEPLACTVAASDKDDMQAQFSAFGPAVDIFAPGTDIVSLVPRKKFGTKSGTSMAAAHVSGAGAYIMALEKIPGNEVCNRLKELAQSSIVRSSDKTTRKLLYNNSGK</sequence>